<name>GLMU_SYNS9</name>
<gene>
    <name evidence="1" type="primary">glmU</name>
    <name type="ordered locus">Syncc9902_1328</name>
</gene>
<organism>
    <name type="scientific">Synechococcus sp. (strain CC9902)</name>
    <dbReference type="NCBI Taxonomy" id="316279"/>
    <lineage>
        <taxon>Bacteria</taxon>
        <taxon>Bacillati</taxon>
        <taxon>Cyanobacteriota</taxon>
        <taxon>Cyanophyceae</taxon>
        <taxon>Synechococcales</taxon>
        <taxon>Synechococcaceae</taxon>
        <taxon>Synechococcus</taxon>
    </lineage>
</organism>
<protein>
    <recommendedName>
        <fullName evidence="1">Bifunctional protein GlmU</fullName>
    </recommendedName>
    <domain>
        <recommendedName>
            <fullName evidence="1">UDP-N-acetylglucosamine pyrophosphorylase</fullName>
            <ecNumber evidence="1">2.7.7.23</ecNumber>
        </recommendedName>
        <alternativeName>
            <fullName evidence="1">N-acetylglucosamine-1-phosphate uridyltransferase</fullName>
        </alternativeName>
    </domain>
    <domain>
        <recommendedName>
            <fullName evidence="1">Glucosamine-1-phosphate N-acetyltransferase</fullName>
            <ecNumber evidence="1">2.3.1.157</ecNumber>
        </recommendedName>
    </domain>
</protein>
<dbReference type="EC" id="2.7.7.23" evidence="1"/>
<dbReference type="EC" id="2.3.1.157" evidence="1"/>
<dbReference type="EMBL" id="CP000097">
    <property type="protein sequence ID" value="ABB26292.1"/>
    <property type="molecule type" value="Genomic_DNA"/>
</dbReference>
<dbReference type="RefSeq" id="WP_011360115.1">
    <property type="nucleotide sequence ID" value="NC_007513.1"/>
</dbReference>
<dbReference type="SMR" id="Q3AVF3"/>
<dbReference type="STRING" id="316279.Syncc9902_1328"/>
<dbReference type="KEGG" id="sye:Syncc9902_1328"/>
<dbReference type="eggNOG" id="COG1207">
    <property type="taxonomic scope" value="Bacteria"/>
</dbReference>
<dbReference type="HOGENOM" id="CLU_029499_15_2_3"/>
<dbReference type="OrthoDB" id="9775031at2"/>
<dbReference type="UniPathway" id="UPA00113">
    <property type="reaction ID" value="UER00532"/>
</dbReference>
<dbReference type="UniPathway" id="UPA00113">
    <property type="reaction ID" value="UER00533"/>
</dbReference>
<dbReference type="UniPathway" id="UPA00973"/>
<dbReference type="Proteomes" id="UP000002712">
    <property type="component" value="Chromosome"/>
</dbReference>
<dbReference type="GO" id="GO:0031470">
    <property type="term" value="C:carboxysome"/>
    <property type="evidence" value="ECO:0007669"/>
    <property type="project" value="UniProtKB-ARBA"/>
</dbReference>
<dbReference type="GO" id="GO:0005737">
    <property type="term" value="C:cytoplasm"/>
    <property type="evidence" value="ECO:0007669"/>
    <property type="project" value="UniProtKB-SubCell"/>
</dbReference>
<dbReference type="GO" id="GO:0016020">
    <property type="term" value="C:membrane"/>
    <property type="evidence" value="ECO:0007669"/>
    <property type="project" value="GOC"/>
</dbReference>
<dbReference type="GO" id="GO:0019134">
    <property type="term" value="F:glucosamine-1-phosphate N-acetyltransferase activity"/>
    <property type="evidence" value="ECO:0007669"/>
    <property type="project" value="UniProtKB-UniRule"/>
</dbReference>
<dbReference type="GO" id="GO:0000287">
    <property type="term" value="F:magnesium ion binding"/>
    <property type="evidence" value="ECO:0007669"/>
    <property type="project" value="UniProtKB-UniRule"/>
</dbReference>
<dbReference type="GO" id="GO:0043886">
    <property type="term" value="F:structural constituent of carboxysome shell"/>
    <property type="evidence" value="ECO:0007669"/>
    <property type="project" value="UniProtKB-ARBA"/>
</dbReference>
<dbReference type="GO" id="GO:0003977">
    <property type="term" value="F:UDP-N-acetylglucosamine diphosphorylase activity"/>
    <property type="evidence" value="ECO:0007669"/>
    <property type="project" value="UniProtKB-UniRule"/>
</dbReference>
<dbReference type="GO" id="GO:0000902">
    <property type="term" value="P:cell morphogenesis"/>
    <property type="evidence" value="ECO:0007669"/>
    <property type="project" value="UniProtKB-UniRule"/>
</dbReference>
<dbReference type="GO" id="GO:0071555">
    <property type="term" value="P:cell wall organization"/>
    <property type="evidence" value="ECO:0007669"/>
    <property type="project" value="UniProtKB-KW"/>
</dbReference>
<dbReference type="GO" id="GO:0009245">
    <property type="term" value="P:lipid A biosynthetic process"/>
    <property type="evidence" value="ECO:0007669"/>
    <property type="project" value="UniProtKB-UniRule"/>
</dbReference>
<dbReference type="GO" id="GO:0009252">
    <property type="term" value="P:peptidoglycan biosynthetic process"/>
    <property type="evidence" value="ECO:0007669"/>
    <property type="project" value="UniProtKB-UniRule"/>
</dbReference>
<dbReference type="GO" id="GO:0008360">
    <property type="term" value="P:regulation of cell shape"/>
    <property type="evidence" value="ECO:0007669"/>
    <property type="project" value="UniProtKB-KW"/>
</dbReference>
<dbReference type="GO" id="GO:0006048">
    <property type="term" value="P:UDP-N-acetylglucosamine biosynthetic process"/>
    <property type="evidence" value="ECO:0007669"/>
    <property type="project" value="UniProtKB-UniPathway"/>
</dbReference>
<dbReference type="CDD" id="cd02540">
    <property type="entry name" value="GT2_GlmU_N_bac"/>
    <property type="match status" value="1"/>
</dbReference>
<dbReference type="CDD" id="cd03353">
    <property type="entry name" value="LbH_GlmU_C"/>
    <property type="match status" value="1"/>
</dbReference>
<dbReference type="Gene3D" id="2.160.10.10">
    <property type="entry name" value="Hexapeptide repeat proteins"/>
    <property type="match status" value="1"/>
</dbReference>
<dbReference type="Gene3D" id="3.90.550.10">
    <property type="entry name" value="Spore Coat Polysaccharide Biosynthesis Protein SpsA, Chain A"/>
    <property type="match status" value="1"/>
</dbReference>
<dbReference type="HAMAP" id="MF_01631">
    <property type="entry name" value="GlmU"/>
    <property type="match status" value="1"/>
</dbReference>
<dbReference type="InterPro" id="IPR005882">
    <property type="entry name" value="Bifunctional_GlmU"/>
</dbReference>
<dbReference type="InterPro" id="IPR050065">
    <property type="entry name" value="GlmU-like"/>
</dbReference>
<dbReference type="InterPro" id="IPR038009">
    <property type="entry name" value="GlmU_C_LbH"/>
</dbReference>
<dbReference type="InterPro" id="IPR001451">
    <property type="entry name" value="Hexapep"/>
</dbReference>
<dbReference type="InterPro" id="IPR025877">
    <property type="entry name" value="MobA-like_NTP_Trfase"/>
</dbReference>
<dbReference type="InterPro" id="IPR029044">
    <property type="entry name" value="Nucleotide-diphossugar_trans"/>
</dbReference>
<dbReference type="InterPro" id="IPR011004">
    <property type="entry name" value="Trimer_LpxA-like_sf"/>
</dbReference>
<dbReference type="NCBIfam" id="TIGR01173">
    <property type="entry name" value="glmU"/>
    <property type="match status" value="1"/>
</dbReference>
<dbReference type="NCBIfam" id="NF010940">
    <property type="entry name" value="PRK14360.1"/>
    <property type="match status" value="1"/>
</dbReference>
<dbReference type="PANTHER" id="PTHR43584:SF3">
    <property type="entry name" value="BIFUNCTIONAL PROTEIN GLMU"/>
    <property type="match status" value="1"/>
</dbReference>
<dbReference type="PANTHER" id="PTHR43584">
    <property type="entry name" value="NUCLEOTIDYL TRANSFERASE"/>
    <property type="match status" value="1"/>
</dbReference>
<dbReference type="Pfam" id="PF00132">
    <property type="entry name" value="Hexapep"/>
    <property type="match status" value="3"/>
</dbReference>
<dbReference type="Pfam" id="PF12804">
    <property type="entry name" value="NTP_transf_3"/>
    <property type="match status" value="1"/>
</dbReference>
<dbReference type="SUPFAM" id="SSF53448">
    <property type="entry name" value="Nucleotide-diphospho-sugar transferases"/>
    <property type="match status" value="1"/>
</dbReference>
<dbReference type="SUPFAM" id="SSF51161">
    <property type="entry name" value="Trimeric LpxA-like enzymes"/>
    <property type="match status" value="1"/>
</dbReference>
<reference key="1">
    <citation type="submission" date="2005-08" db="EMBL/GenBank/DDBJ databases">
        <title>Complete sequence of Synechococcus sp. CC9902.</title>
        <authorList>
            <person name="Copeland A."/>
            <person name="Lucas S."/>
            <person name="Lapidus A."/>
            <person name="Barry K."/>
            <person name="Detter J.C."/>
            <person name="Glavina T."/>
            <person name="Hammon N."/>
            <person name="Israni S."/>
            <person name="Pitluck S."/>
            <person name="Martinez M."/>
            <person name="Schmutz J."/>
            <person name="Larimer F."/>
            <person name="Land M."/>
            <person name="Kyrpides N."/>
            <person name="Ivanova N."/>
            <person name="Richardson P."/>
        </authorList>
    </citation>
    <scope>NUCLEOTIDE SEQUENCE [LARGE SCALE GENOMIC DNA]</scope>
    <source>
        <strain>CC9902</strain>
    </source>
</reference>
<keyword id="KW-0012">Acyltransferase</keyword>
<keyword id="KW-0133">Cell shape</keyword>
<keyword id="KW-0961">Cell wall biogenesis/degradation</keyword>
<keyword id="KW-0963">Cytoplasm</keyword>
<keyword id="KW-0460">Magnesium</keyword>
<keyword id="KW-0479">Metal-binding</keyword>
<keyword id="KW-0511">Multifunctional enzyme</keyword>
<keyword id="KW-0548">Nucleotidyltransferase</keyword>
<keyword id="KW-0573">Peptidoglycan synthesis</keyword>
<keyword id="KW-1185">Reference proteome</keyword>
<keyword id="KW-0677">Repeat</keyword>
<keyword id="KW-0808">Transferase</keyword>
<comment type="function">
    <text evidence="1">Catalyzes the last two sequential reactions in the de novo biosynthetic pathway for UDP-N-acetylglucosamine (UDP-GlcNAc). The C-terminal domain catalyzes the transfer of acetyl group from acetyl coenzyme A to glucosamine-1-phosphate (GlcN-1-P) to produce N-acetylglucosamine-1-phosphate (GlcNAc-1-P), which is converted into UDP-GlcNAc by the transfer of uridine 5-monophosphate (from uridine 5-triphosphate), a reaction catalyzed by the N-terminal domain.</text>
</comment>
<comment type="catalytic activity">
    <reaction evidence="1">
        <text>alpha-D-glucosamine 1-phosphate + acetyl-CoA = N-acetyl-alpha-D-glucosamine 1-phosphate + CoA + H(+)</text>
        <dbReference type="Rhea" id="RHEA:13725"/>
        <dbReference type="ChEBI" id="CHEBI:15378"/>
        <dbReference type="ChEBI" id="CHEBI:57287"/>
        <dbReference type="ChEBI" id="CHEBI:57288"/>
        <dbReference type="ChEBI" id="CHEBI:57776"/>
        <dbReference type="ChEBI" id="CHEBI:58516"/>
        <dbReference type="EC" id="2.3.1.157"/>
    </reaction>
</comment>
<comment type="catalytic activity">
    <reaction evidence="1">
        <text>N-acetyl-alpha-D-glucosamine 1-phosphate + UTP + H(+) = UDP-N-acetyl-alpha-D-glucosamine + diphosphate</text>
        <dbReference type="Rhea" id="RHEA:13509"/>
        <dbReference type="ChEBI" id="CHEBI:15378"/>
        <dbReference type="ChEBI" id="CHEBI:33019"/>
        <dbReference type="ChEBI" id="CHEBI:46398"/>
        <dbReference type="ChEBI" id="CHEBI:57705"/>
        <dbReference type="ChEBI" id="CHEBI:57776"/>
        <dbReference type="EC" id="2.7.7.23"/>
    </reaction>
</comment>
<comment type="cofactor">
    <cofactor evidence="1">
        <name>Mg(2+)</name>
        <dbReference type="ChEBI" id="CHEBI:18420"/>
    </cofactor>
    <text evidence="1">Binds 1 Mg(2+) ion per subunit.</text>
</comment>
<comment type="pathway">
    <text evidence="1">Nucleotide-sugar biosynthesis; UDP-N-acetyl-alpha-D-glucosamine biosynthesis; N-acetyl-alpha-D-glucosamine 1-phosphate from alpha-D-glucosamine 6-phosphate (route II): step 2/2.</text>
</comment>
<comment type="pathway">
    <text evidence="1">Nucleotide-sugar biosynthesis; UDP-N-acetyl-alpha-D-glucosamine biosynthesis; UDP-N-acetyl-alpha-D-glucosamine from N-acetyl-alpha-D-glucosamine 1-phosphate: step 1/1.</text>
</comment>
<comment type="pathway">
    <text evidence="1">Bacterial outer membrane biogenesis; LPS lipid A biosynthesis.</text>
</comment>
<comment type="subunit">
    <text evidence="1">Homotrimer.</text>
</comment>
<comment type="subcellular location">
    <subcellularLocation>
        <location evidence="1">Cytoplasm</location>
    </subcellularLocation>
</comment>
<comment type="similarity">
    <text evidence="1">In the N-terminal section; belongs to the N-acetylglucosamine-1-phosphate uridyltransferase family.</text>
</comment>
<comment type="similarity">
    <text evidence="1">In the C-terminal section; belongs to the transferase hexapeptide repeat family.</text>
</comment>
<evidence type="ECO:0000255" key="1">
    <source>
        <dbReference type="HAMAP-Rule" id="MF_01631"/>
    </source>
</evidence>
<proteinExistence type="inferred from homology"/>
<sequence>MLAVAVLAAGKGTRMKSALPKVLQPLAGATLVERVLASAKNLQPERRLLIVGHQAERVEQTLEHVNGLEFVLQSPQNGTGHAVQQLLPVMEGFEGELLVLNGDVPLLRAATIDALVQGHRSSGADVTLLTARLADPTGYGRVFADTDGQVSNIIEHRDCSEEQRGNNLTNAGIYCFNWAALAEVLPQLSNDNDQGELYLTDTVAMLPRAMHLEVDDPDEVNGINNRKQLAQCEGVLQQRLRDYWMDEGVTFVDPASCTLSEDCRFGRDVVVEPQTHFRGCCSIGDNSKLGPGTLIDNASLGDRVEVVQSVVREAKVGDDVSIGPFAHLRPAADVGHGCRIGNFVEVKKSSLGAGSKVNHLSYIGDASLGENVNVGAGTITANYDGVNKHQTVIGDHSKTGANSVLVAPVTIGDHVTIGAGSTITKDVPSKALSIGRARQMTKDNWANRSI</sequence>
<accession>Q3AVF3</accession>
<feature type="chain" id="PRO_0000244313" description="Bifunctional protein GlmU">
    <location>
        <begin position="1"/>
        <end position="450"/>
    </location>
</feature>
<feature type="region of interest" description="Pyrophosphorylase" evidence="1">
    <location>
        <begin position="1"/>
        <end position="226"/>
    </location>
</feature>
<feature type="region of interest" description="Linker" evidence="1">
    <location>
        <begin position="227"/>
        <end position="247"/>
    </location>
</feature>
<feature type="region of interest" description="N-acetyltransferase" evidence="1">
    <location>
        <begin position="248"/>
        <end position="450"/>
    </location>
</feature>
<feature type="active site" description="Proton acceptor" evidence="1">
    <location>
        <position position="359"/>
    </location>
</feature>
<feature type="binding site" evidence="1">
    <location>
        <begin position="7"/>
        <end position="10"/>
    </location>
    <ligand>
        <name>UDP-N-acetyl-alpha-D-glucosamine</name>
        <dbReference type="ChEBI" id="CHEBI:57705"/>
    </ligand>
</feature>
<feature type="binding site" evidence="1">
    <location>
        <position position="21"/>
    </location>
    <ligand>
        <name>UDP-N-acetyl-alpha-D-glucosamine</name>
        <dbReference type="ChEBI" id="CHEBI:57705"/>
    </ligand>
</feature>
<feature type="binding site" evidence="1">
    <location>
        <position position="73"/>
    </location>
    <ligand>
        <name>UDP-N-acetyl-alpha-D-glucosamine</name>
        <dbReference type="ChEBI" id="CHEBI:57705"/>
    </ligand>
</feature>
<feature type="binding site" evidence="1">
    <location>
        <begin position="78"/>
        <end position="79"/>
    </location>
    <ligand>
        <name>UDP-N-acetyl-alpha-D-glucosamine</name>
        <dbReference type="ChEBI" id="CHEBI:57705"/>
    </ligand>
</feature>
<feature type="binding site" evidence="1">
    <location>
        <position position="103"/>
    </location>
    <ligand>
        <name>Mg(2+)</name>
        <dbReference type="ChEBI" id="CHEBI:18420"/>
    </ligand>
</feature>
<feature type="binding site" evidence="1">
    <location>
        <position position="140"/>
    </location>
    <ligand>
        <name>UDP-N-acetyl-alpha-D-glucosamine</name>
        <dbReference type="ChEBI" id="CHEBI:57705"/>
    </ligand>
</feature>
<feature type="binding site" evidence="1">
    <location>
        <position position="155"/>
    </location>
    <ligand>
        <name>UDP-N-acetyl-alpha-D-glucosamine</name>
        <dbReference type="ChEBI" id="CHEBI:57705"/>
    </ligand>
</feature>
<feature type="binding site" evidence="1">
    <location>
        <position position="170"/>
    </location>
    <ligand>
        <name>UDP-N-acetyl-alpha-D-glucosamine</name>
        <dbReference type="ChEBI" id="CHEBI:57705"/>
    </ligand>
</feature>
<feature type="binding site" evidence="1">
    <location>
        <position position="224"/>
    </location>
    <ligand>
        <name>Mg(2+)</name>
        <dbReference type="ChEBI" id="CHEBI:18420"/>
    </ligand>
</feature>
<feature type="binding site" evidence="1">
    <location>
        <position position="224"/>
    </location>
    <ligand>
        <name>UDP-N-acetyl-alpha-D-glucosamine</name>
        <dbReference type="ChEBI" id="CHEBI:57705"/>
    </ligand>
</feature>
<feature type="binding site" evidence="1">
    <location>
        <position position="329"/>
    </location>
    <ligand>
        <name>UDP-N-acetyl-alpha-D-glucosamine</name>
        <dbReference type="ChEBI" id="CHEBI:57705"/>
    </ligand>
</feature>
<feature type="binding site" evidence="1">
    <location>
        <position position="347"/>
    </location>
    <ligand>
        <name>UDP-N-acetyl-alpha-D-glucosamine</name>
        <dbReference type="ChEBI" id="CHEBI:57705"/>
    </ligand>
</feature>
<feature type="binding site" evidence="1">
    <location>
        <position position="362"/>
    </location>
    <ligand>
        <name>UDP-N-acetyl-alpha-D-glucosamine</name>
        <dbReference type="ChEBI" id="CHEBI:57705"/>
    </ligand>
</feature>
<feature type="binding site" evidence="1">
    <location>
        <position position="373"/>
    </location>
    <ligand>
        <name>UDP-N-acetyl-alpha-D-glucosamine</name>
        <dbReference type="ChEBI" id="CHEBI:57705"/>
    </ligand>
</feature>
<feature type="binding site" evidence="1">
    <location>
        <position position="376"/>
    </location>
    <ligand>
        <name>acetyl-CoA</name>
        <dbReference type="ChEBI" id="CHEBI:57288"/>
    </ligand>
</feature>
<feature type="binding site" evidence="1">
    <location>
        <begin position="382"/>
        <end position="383"/>
    </location>
    <ligand>
        <name>acetyl-CoA</name>
        <dbReference type="ChEBI" id="CHEBI:57288"/>
    </ligand>
</feature>
<feature type="binding site" evidence="1">
    <location>
        <position position="419"/>
    </location>
    <ligand>
        <name>acetyl-CoA</name>
        <dbReference type="ChEBI" id="CHEBI:57288"/>
    </ligand>
</feature>
<feature type="binding site" evidence="1">
    <location>
        <position position="436"/>
    </location>
    <ligand>
        <name>acetyl-CoA</name>
        <dbReference type="ChEBI" id="CHEBI:57288"/>
    </ligand>
</feature>